<accession>Q6PDS0</accession>
<feature type="signal peptide" evidence="1">
    <location>
        <begin position="1"/>
        <end position="24"/>
    </location>
</feature>
<feature type="chain" id="PRO_0000015165" description="V-set and transmembrane domain-containing protein 2-like protein">
    <location>
        <begin position="25"/>
        <end position="220"/>
    </location>
</feature>
<feature type="domain" description="Ig-like">
    <location>
        <begin position="41"/>
        <end position="158"/>
    </location>
</feature>
<feature type="region of interest" description="Disordered" evidence="3">
    <location>
        <begin position="165"/>
        <end position="220"/>
    </location>
</feature>
<feature type="compositionally biased region" description="Pro residues" evidence="3">
    <location>
        <begin position="165"/>
        <end position="180"/>
    </location>
</feature>
<feature type="disulfide bond" evidence="2">
    <location>
        <begin position="62"/>
        <end position="142"/>
    </location>
</feature>
<name>VTM2L_MOUSE</name>
<organism>
    <name type="scientific">Mus musculus</name>
    <name type="common">Mouse</name>
    <dbReference type="NCBI Taxonomy" id="10090"/>
    <lineage>
        <taxon>Eukaryota</taxon>
        <taxon>Metazoa</taxon>
        <taxon>Chordata</taxon>
        <taxon>Craniata</taxon>
        <taxon>Vertebrata</taxon>
        <taxon>Euteleostomi</taxon>
        <taxon>Mammalia</taxon>
        <taxon>Eutheria</taxon>
        <taxon>Euarchontoglires</taxon>
        <taxon>Glires</taxon>
        <taxon>Rodentia</taxon>
        <taxon>Myomorpha</taxon>
        <taxon>Muroidea</taxon>
        <taxon>Muridae</taxon>
        <taxon>Murinae</taxon>
        <taxon>Mus</taxon>
        <taxon>Mus</taxon>
    </lineage>
</organism>
<proteinExistence type="evidence at transcript level"/>
<evidence type="ECO:0000255" key="1"/>
<evidence type="ECO:0000255" key="2">
    <source>
        <dbReference type="PROSITE-ProRule" id="PRU00114"/>
    </source>
</evidence>
<evidence type="ECO:0000256" key="3">
    <source>
        <dbReference type="SAM" id="MobiDB-lite"/>
    </source>
</evidence>
<gene>
    <name type="primary">Vstm2l</name>
    <name type="synonym">Gm691</name>
</gene>
<keyword id="KW-1015">Disulfide bond</keyword>
<keyword id="KW-0393">Immunoglobulin domain</keyword>
<keyword id="KW-1185">Reference proteome</keyword>
<keyword id="KW-0732">Signal</keyword>
<reference key="1">
    <citation type="journal article" date="2004" name="Genome Res.">
        <title>The status, quality, and expansion of the NIH full-length cDNA project: the Mammalian Gene Collection (MGC).</title>
        <authorList>
            <consortium name="The MGC Project Team"/>
        </authorList>
    </citation>
    <scope>NUCLEOTIDE SEQUENCE [LARGE SCALE MRNA]</scope>
    <source>
        <strain>C57BL/6J</strain>
        <tissue>Brain</tissue>
    </source>
</reference>
<sequence>MGAPLAAALGALHYLALFLQLGGATRPAGHAPWDNHVSGHALFTETPHDMTARTGEDVEMACSFRGSGSPSYSLEIQWWYLRSHRDWTDKQTWASNQLKASQQEDSGKDATKISVVKVVGSNISHKLRLSRVKPTDEGTYECRVIDFSDGGRGVPRVLCLLIPLPAPPRAPRPRGQPPGEEPGRGPTLLFLIILPGTGSGTPREAEPHQPHAGGCPARQS</sequence>
<dbReference type="EMBL" id="BC058538">
    <property type="protein sequence ID" value="AAH58538.1"/>
    <property type="molecule type" value="mRNA"/>
</dbReference>
<dbReference type="RefSeq" id="NP_941029.2">
    <property type="nucleotide sequence ID" value="NM_198627.2"/>
</dbReference>
<dbReference type="SMR" id="Q6PDS0"/>
<dbReference type="FunCoup" id="Q6PDS0">
    <property type="interactions" value="645"/>
</dbReference>
<dbReference type="STRING" id="10090.ENSMUSP00000105149"/>
<dbReference type="iPTMnet" id="Q6PDS0"/>
<dbReference type="PhosphoSitePlus" id="Q6PDS0"/>
<dbReference type="ProteomicsDB" id="297593"/>
<dbReference type="DNASU" id="277432"/>
<dbReference type="GeneID" id="277432"/>
<dbReference type="KEGG" id="mmu:277432"/>
<dbReference type="AGR" id="MGI:2685537"/>
<dbReference type="CTD" id="128434"/>
<dbReference type="MGI" id="MGI:2685537">
    <property type="gene designation" value="Vstm2l"/>
</dbReference>
<dbReference type="eggNOG" id="ENOG502RY0S">
    <property type="taxonomic scope" value="Eukaryota"/>
</dbReference>
<dbReference type="InParanoid" id="Q6PDS0"/>
<dbReference type="OrthoDB" id="9870402at2759"/>
<dbReference type="PhylomeDB" id="Q6PDS0"/>
<dbReference type="BioGRID-ORCS" id="277432">
    <property type="hits" value="0 hits in 79 CRISPR screens"/>
</dbReference>
<dbReference type="ChiTaRS" id="Vstm2l">
    <property type="organism name" value="mouse"/>
</dbReference>
<dbReference type="PRO" id="PR:Q6PDS0"/>
<dbReference type="Proteomes" id="UP000000589">
    <property type="component" value="Unplaced"/>
</dbReference>
<dbReference type="RNAct" id="Q6PDS0">
    <property type="molecule type" value="protein"/>
</dbReference>
<dbReference type="GO" id="GO:0005737">
    <property type="term" value="C:cytoplasm"/>
    <property type="evidence" value="ECO:0000250"/>
    <property type="project" value="UniProtKB"/>
</dbReference>
<dbReference type="GO" id="GO:0005576">
    <property type="term" value="C:extracellular region"/>
    <property type="evidence" value="ECO:0000314"/>
    <property type="project" value="UniProtKB"/>
</dbReference>
<dbReference type="GO" id="GO:0043524">
    <property type="term" value="P:negative regulation of neuron apoptotic process"/>
    <property type="evidence" value="ECO:0000314"/>
    <property type="project" value="UniProtKB"/>
</dbReference>
<dbReference type="FunFam" id="2.60.40.10:FF:000735">
    <property type="entry name" value="V-set and transmembrane domain containing 2 like"/>
    <property type="match status" value="1"/>
</dbReference>
<dbReference type="Gene3D" id="2.60.40.10">
    <property type="entry name" value="Immunoglobulins"/>
    <property type="match status" value="1"/>
</dbReference>
<dbReference type="InterPro" id="IPR007110">
    <property type="entry name" value="Ig-like_dom"/>
</dbReference>
<dbReference type="InterPro" id="IPR036179">
    <property type="entry name" value="Ig-like_dom_sf"/>
</dbReference>
<dbReference type="InterPro" id="IPR013783">
    <property type="entry name" value="Ig-like_fold"/>
</dbReference>
<dbReference type="InterPro" id="IPR003599">
    <property type="entry name" value="Ig_sub"/>
</dbReference>
<dbReference type="InterPro" id="IPR013106">
    <property type="entry name" value="Ig_V-set"/>
</dbReference>
<dbReference type="InterPro" id="IPR051102">
    <property type="entry name" value="IgSF_V-set/TM_domain"/>
</dbReference>
<dbReference type="PANTHER" id="PTHR12207">
    <property type="entry name" value="V-SET AND TRANSMEMBRANE DOMAIN-CONTAINING PROTEIN"/>
    <property type="match status" value="1"/>
</dbReference>
<dbReference type="PANTHER" id="PTHR12207:SF31">
    <property type="entry name" value="V-SET AND TRANSMEMBRANE DOMAIN-CONTAINING PROTEIN 2-LIKE PROTEIN"/>
    <property type="match status" value="1"/>
</dbReference>
<dbReference type="Pfam" id="PF07686">
    <property type="entry name" value="V-set"/>
    <property type="match status" value="1"/>
</dbReference>
<dbReference type="SMART" id="SM00409">
    <property type="entry name" value="IG"/>
    <property type="match status" value="1"/>
</dbReference>
<dbReference type="SUPFAM" id="SSF48726">
    <property type="entry name" value="Immunoglobulin"/>
    <property type="match status" value="1"/>
</dbReference>
<dbReference type="PROSITE" id="PS50835">
    <property type="entry name" value="IG_LIKE"/>
    <property type="match status" value="1"/>
</dbReference>
<protein>
    <recommendedName>
        <fullName>V-set and transmembrane domain-containing protein 2-like protein</fullName>
    </recommendedName>
</protein>